<organism>
    <name type="scientific">Buchnera aphidicola subsp. Acyrthosiphon pisum (strain APS)</name>
    <name type="common">Acyrthosiphon pisum symbiotic bacterium</name>
    <dbReference type="NCBI Taxonomy" id="107806"/>
    <lineage>
        <taxon>Bacteria</taxon>
        <taxon>Pseudomonadati</taxon>
        <taxon>Pseudomonadota</taxon>
        <taxon>Gammaproteobacteria</taxon>
        <taxon>Enterobacterales</taxon>
        <taxon>Erwiniaceae</taxon>
        <taxon>Buchnera</taxon>
    </lineage>
</organism>
<name>RSMA_BUCAI</name>
<gene>
    <name evidence="1" type="primary">rsmA</name>
    <name evidence="1" type="synonym">ksgA</name>
    <name type="ordered locus">BU141</name>
</gene>
<sequence>MPKNFKKHLPLKKYGQNFLINKDTIKNIIKIIDPKTTETLVEIGPGLAALTKPMCELLEELIVIEIDQDLLFLLKKRSFYSKLIVFYQNALNFNFLNLFHKKKQLIRIFGNLPYNISTSLIIFLFKQIKVIQDMNFMLQKEVAERLISTPGNKSYGRLSIISQYYCDIKILLNVSPEDFRPIPKVHSVFINLKPHTNSPYFVYNVNILSAITKDAFQNRRKILRHSLKNLFSEKELIKLEINSNLRAENVSVSHYCKLANYLYKKSNNLLKIN</sequence>
<proteinExistence type="inferred from homology"/>
<protein>
    <recommendedName>
        <fullName evidence="1">Ribosomal RNA small subunit methyltransferase A</fullName>
        <ecNumber evidence="1">2.1.1.182</ecNumber>
    </recommendedName>
    <alternativeName>
        <fullName evidence="1">16S rRNA (adenine(1518)-N(6)/adenine(1519)-N(6))-dimethyltransferase</fullName>
    </alternativeName>
    <alternativeName>
        <fullName evidence="1">16S rRNA dimethyladenosine transferase</fullName>
    </alternativeName>
    <alternativeName>
        <fullName evidence="1">16S rRNA dimethylase</fullName>
    </alternativeName>
    <alternativeName>
        <fullName evidence="1">S-adenosylmethionine-6-N', N'-adenosyl(rRNA) dimethyltransferase</fullName>
    </alternativeName>
</protein>
<evidence type="ECO:0000255" key="1">
    <source>
        <dbReference type="HAMAP-Rule" id="MF_00607"/>
    </source>
</evidence>
<accession>P57241</accession>
<feature type="chain" id="PRO_0000101499" description="Ribosomal RNA small subunit methyltransferase A">
    <location>
        <begin position="1"/>
        <end position="273"/>
    </location>
</feature>
<feature type="binding site" evidence="1">
    <location>
        <position position="17"/>
    </location>
    <ligand>
        <name>S-adenosyl-L-methionine</name>
        <dbReference type="ChEBI" id="CHEBI:59789"/>
    </ligand>
</feature>
<feature type="binding site" evidence="1">
    <location>
        <position position="19"/>
    </location>
    <ligand>
        <name>S-adenosyl-L-methionine</name>
        <dbReference type="ChEBI" id="CHEBI:59789"/>
    </ligand>
</feature>
<feature type="binding site" evidence="1">
    <location>
        <position position="44"/>
    </location>
    <ligand>
        <name>S-adenosyl-L-methionine</name>
        <dbReference type="ChEBI" id="CHEBI:59789"/>
    </ligand>
</feature>
<feature type="binding site" evidence="1">
    <location>
        <position position="65"/>
    </location>
    <ligand>
        <name>S-adenosyl-L-methionine</name>
        <dbReference type="ChEBI" id="CHEBI:59789"/>
    </ligand>
</feature>
<feature type="binding site" evidence="1">
    <location>
        <position position="111"/>
    </location>
    <ligand>
        <name>S-adenosyl-L-methionine</name>
        <dbReference type="ChEBI" id="CHEBI:59789"/>
    </ligand>
</feature>
<comment type="function">
    <text evidence="1">Specifically dimethylates two adjacent adenosines (A1518 and A1519) in the loop of a conserved hairpin near the 3'-end of 16S rRNA in the 30S particle. May play a critical role in biogenesis of 30S subunits.</text>
</comment>
<comment type="catalytic activity">
    <reaction evidence="1">
        <text>adenosine(1518)/adenosine(1519) in 16S rRNA + 4 S-adenosyl-L-methionine = N(6)-dimethyladenosine(1518)/N(6)-dimethyladenosine(1519) in 16S rRNA + 4 S-adenosyl-L-homocysteine + 4 H(+)</text>
        <dbReference type="Rhea" id="RHEA:19609"/>
        <dbReference type="Rhea" id="RHEA-COMP:10232"/>
        <dbReference type="Rhea" id="RHEA-COMP:10233"/>
        <dbReference type="ChEBI" id="CHEBI:15378"/>
        <dbReference type="ChEBI" id="CHEBI:57856"/>
        <dbReference type="ChEBI" id="CHEBI:59789"/>
        <dbReference type="ChEBI" id="CHEBI:74411"/>
        <dbReference type="ChEBI" id="CHEBI:74493"/>
        <dbReference type="EC" id="2.1.1.182"/>
    </reaction>
</comment>
<comment type="subcellular location">
    <subcellularLocation>
        <location evidence="1">Cytoplasm</location>
    </subcellularLocation>
</comment>
<comment type="similarity">
    <text evidence="1">Belongs to the class I-like SAM-binding methyltransferase superfamily. rRNA adenine N(6)-methyltransferase family. RsmA subfamily.</text>
</comment>
<reference key="1">
    <citation type="journal article" date="2000" name="Nature">
        <title>Genome sequence of the endocellular bacterial symbiont of aphids Buchnera sp. APS.</title>
        <authorList>
            <person name="Shigenobu S."/>
            <person name="Watanabe H."/>
            <person name="Hattori M."/>
            <person name="Sakaki Y."/>
            <person name="Ishikawa H."/>
        </authorList>
    </citation>
    <scope>NUCLEOTIDE SEQUENCE [LARGE SCALE GENOMIC DNA]</scope>
    <source>
        <strain>APS</strain>
    </source>
</reference>
<keyword id="KW-0963">Cytoplasm</keyword>
<keyword id="KW-0489">Methyltransferase</keyword>
<keyword id="KW-1185">Reference proteome</keyword>
<keyword id="KW-0694">RNA-binding</keyword>
<keyword id="KW-0698">rRNA processing</keyword>
<keyword id="KW-0949">S-adenosyl-L-methionine</keyword>
<keyword id="KW-0808">Transferase</keyword>
<dbReference type="EC" id="2.1.1.182" evidence="1"/>
<dbReference type="EMBL" id="BA000003">
    <property type="protein sequence ID" value="BAB12859.1"/>
    <property type="molecule type" value="Genomic_DNA"/>
</dbReference>
<dbReference type="RefSeq" id="NP_239973.1">
    <property type="nucleotide sequence ID" value="NC_002528.1"/>
</dbReference>
<dbReference type="RefSeq" id="WP_010895968.1">
    <property type="nucleotide sequence ID" value="NC_002528.1"/>
</dbReference>
<dbReference type="SMR" id="P57241"/>
<dbReference type="STRING" id="563178.BUAP5A_139"/>
<dbReference type="EnsemblBacteria" id="BAB12859">
    <property type="protein sequence ID" value="BAB12859"/>
    <property type="gene ID" value="BAB12859"/>
</dbReference>
<dbReference type="KEGG" id="buc:BU141"/>
<dbReference type="PATRIC" id="fig|107806.10.peg.150"/>
<dbReference type="eggNOG" id="COG0030">
    <property type="taxonomic scope" value="Bacteria"/>
</dbReference>
<dbReference type="HOGENOM" id="CLU_041220_0_1_6"/>
<dbReference type="Proteomes" id="UP000001806">
    <property type="component" value="Chromosome"/>
</dbReference>
<dbReference type="GO" id="GO:0005829">
    <property type="term" value="C:cytosol"/>
    <property type="evidence" value="ECO:0007669"/>
    <property type="project" value="TreeGrafter"/>
</dbReference>
<dbReference type="GO" id="GO:0052908">
    <property type="term" value="F:16S rRNA (adenine(1518)-N(6)/adenine(1519)-N(6))-dimethyltransferase activity"/>
    <property type="evidence" value="ECO:0007669"/>
    <property type="project" value="UniProtKB-EC"/>
</dbReference>
<dbReference type="GO" id="GO:0003723">
    <property type="term" value="F:RNA binding"/>
    <property type="evidence" value="ECO:0007669"/>
    <property type="project" value="UniProtKB-KW"/>
</dbReference>
<dbReference type="FunFam" id="1.10.8.100:FF:000001">
    <property type="entry name" value="Ribosomal RNA small subunit methyltransferase A"/>
    <property type="match status" value="1"/>
</dbReference>
<dbReference type="Gene3D" id="1.10.8.100">
    <property type="entry name" value="Ribosomal RNA adenine dimethylase-like, domain 2"/>
    <property type="match status" value="1"/>
</dbReference>
<dbReference type="Gene3D" id="3.40.50.150">
    <property type="entry name" value="Vaccinia Virus protein VP39"/>
    <property type="match status" value="1"/>
</dbReference>
<dbReference type="HAMAP" id="MF_00607">
    <property type="entry name" value="16SrRNA_methyltr_A"/>
    <property type="match status" value="1"/>
</dbReference>
<dbReference type="InterPro" id="IPR001737">
    <property type="entry name" value="KsgA/Erm"/>
</dbReference>
<dbReference type="InterPro" id="IPR023165">
    <property type="entry name" value="rRNA_Ade_diMease-like_C"/>
</dbReference>
<dbReference type="InterPro" id="IPR020596">
    <property type="entry name" value="rRNA_Ade_Mease_Trfase_CS"/>
</dbReference>
<dbReference type="InterPro" id="IPR020598">
    <property type="entry name" value="rRNA_Ade_methylase_Trfase_N"/>
</dbReference>
<dbReference type="InterPro" id="IPR011530">
    <property type="entry name" value="rRNA_adenine_dimethylase"/>
</dbReference>
<dbReference type="InterPro" id="IPR029063">
    <property type="entry name" value="SAM-dependent_MTases_sf"/>
</dbReference>
<dbReference type="NCBIfam" id="TIGR00755">
    <property type="entry name" value="ksgA"/>
    <property type="match status" value="1"/>
</dbReference>
<dbReference type="PANTHER" id="PTHR11727">
    <property type="entry name" value="DIMETHYLADENOSINE TRANSFERASE"/>
    <property type="match status" value="1"/>
</dbReference>
<dbReference type="PANTHER" id="PTHR11727:SF7">
    <property type="entry name" value="DIMETHYLADENOSINE TRANSFERASE-RELATED"/>
    <property type="match status" value="1"/>
</dbReference>
<dbReference type="Pfam" id="PF00398">
    <property type="entry name" value="RrnaAD"/>
    <property type="match status" value="1"/>
</dbReference>
<dbReference type="SMART" id="SM00650">
    <property type="entry name" value="rADc"/>
    <property type="match status" value="1"/>
</dbReference>
<dbReference type="SUPFAM" id="SSF53335">
    <property type="entry name" value="S-adenosyl-L-methionine-dependent methyltransferases"/>
    <property type="match status" value="1"/>
</dbReference>
<dbReference type="PROSITE" id="PS01131">
    <property type="entry name" value="RRNA_A_DIMETH"/>
    <property type="match status" value="1"/>
</dbReference>
<dbReference type="PROSITE" id="PS51689">
    <property type="entry name" value="SAM_RNA_A_N6_MT"/>
    <property type="match status" value="1"/>
</dbReference>